<dbReference type="EC" id="1.1.98.2" evidence="1"/>
<dbReference type="EMBL" id="CP001618">
    <property type="protein sequence ID" value="ACQ79943.1"/>
    <property type="molecule type" value="Genomic_DNA"/>
</dbReference>
<dbReference type="RefSeq" id="WP_015882183.1">
    <property type="nucleotide sequence ID" value="NC_012669.1"/>
</dbReference>
<dbReference type="SMR" id="C5C430"/>
<dbReference type="STRING" id="471853.Bcav_1687"/>
<dbReference type="KEGG" id="bcv:Bcav_1687"/>
<dbReference type="eggNOG" id="COG2141">
    <property type="taxonomic scope" value="Bacteria"/>
</dbReference>
<dbReference type="HOGENOM" id="CLU_027853_4_0_11"/>
<dbReference type="OrthoDB" id="180193at2"/>
<dbReference type="Proteomes" id="UP000007962">
    <property type="component" value="Chromosome"/>
</dbReference>
<dbReference type="GO" id="GO:0070967">
    <property type="term" value="F:coenzyme F420 binding"/>
    <property type="evidence" value="ECO:0007669"/>
    <property type="project" value="UniProtKB-UniRule"/>
</dbReference>
<dbReference type="GO" id="GO:0052749">
    <property type="term" value="F:glucose-6-phosphate dehydrogenase (coenzyme F420) activity"/>
    <property type="evidence" value="ECO:0007669"/>
    <property type="project" value="UniProtKB-EC"/>
</dbReference>
<dbReference type="GO" id="GO:0016705">
    <property type="term" value="F:oxidoreductase activity, acting on paired donors, with incorporation or reduction of molecular oxygen"/>
    <property type="evidence" value="ECO:0007669"/>
    <property type="project" value="InterPro"/>
</dbReference>
<dbReference type="GO" id="GO:0005975">
    <property type="term" value="P:carbohydrate metabolic process"/>
    <property type="evidence" value="ECO:0007669"/>
    <property type="project" value="UniProtKB-UniRule"/>
</dbReference>
<dbReference type="CDD" id="cd01097">
    <property type="entry name" value="Tetrahydromethanopterin_reductase"/>
    <property type="match status" value="1"/>
</dbReference>
<dbReference type="Gene3D" id="3.20.20.30">
    <property type="entry name" value="Luciferase-like domain"/>
    <property type="match status" value="1"/>
</dbReference>
<dbReference type="HAMAP" id="MF_02123">
    <property type="entry name" value="F420_G6P_DH"/>
    <property type="match status" value="1"/>
</dbReference>
<dbReference type="InterPro" id="IPR019944">
    <property type="entry name" value="F420-dep_G6P_DH"/>
</dbReference>
<dbReference type="InterPro" id="IPR050564">
    <property type="entry name" value="F420-G6PD/mer"/>
</dbReference>
<dbReference type="InterPro" id="IPR019945">
    <property type="entry name" value="F420_G6P_DH-rel"/>
</dbReference>
<dbReference type="InterPro" id="IPR011251">
    <property type="entry name" value="Luciferase-like_dom"/>
</dbReference>
<dbReference type="InterPro" id="IPR036661">
    <property type="entry name" value="Luciferase-like_sf"/>
</dbReference>
<dbReference type="NCBIfam" id="TIGR03554">
    <property type="entry name" value="F420_G6P_DH"/>
    <property type="match status" value="1"/>
</dbReference>
<dbReference type="NCBIfam" id="TIGR03557">
    <property type="entry name" value="F420_G6P_family"/>
    <property type="match status" value="1"/>
</dbReference>
<dbReference type="PANTHER" id="PTHR43244">
    <property type="match status" value="1"/>
</dbReference>
<dbReference type="PANTHER" id="PTHR43244:SF1">
    <property type="entry name" value="5,10-METHYLENETETRAHYDROMETHANOPTERIN REDUCTASE"/>
    <property type="match status" value="1"/>
</dbReference>
<dbReference type="Pfam" id="PF00296">
    <property type="entry name" value="Bac_luciferase"/>
    <property type="match status" value="1"/>
</dbReference>
<dbReference type="SUPFAM" id="SSF51679">
    <property type="entry name" value="Bacterial luciferase-like"/>
    <property type="match status" value="1"/>
</dbReference>
<accession>C5C430</accession>
<gene>
    <name evidence="1" type="primary">fgd</name>
    <name type="ordered locus">Bcav_1687</name>
</gene>
<keyword id="KW-0119">Carbohydrate metabolism</keyword>
<keyword id="KW-0560">Oxidoreductase</keyword>
<keyword id="KW-1185">Reference proteome</keyword>
<protein>
    <recommendedName>
        <fullName evidence="1">F420-dependent glucose-6-phosphate dehydrogenase</fullName>
        <shortName evidence="1">FGD</shortName>
        <shortName evidence="1">G6PD</shortName>
        <ecNumber evidence="1">1.1.98.2</ecNumber>
    </recommendedName>
</protein>
<organism>
    <name type="scientific">Beutenbergia cavernae (strain ATCC BAA-8 / DSM 12333 / CCUG 43141 / JCM 11478 / NBRC 16432 / NCIMB 13614 / HKI 0122)</name>
    <dbReference type="NCBI Taxonomy" id="471853"/>
    <lineage>
        <taxon>Bacteria</taxon>
        <taxon>Bacillati</taxon>
        <taxon>Actinomycetota</taxon>
        <taxon>Actinomycetes</taxon>
        <taxon>Micrococcales</taxon>
        <taxon>Beutenbergiaceae</taxon>
        <taxon>Beutenbergia</taxon>
    </lineage>
</organism>
<evidence type="ECO:0000255" key="1">
    <source>
        <dbReference type="HAMAP-Rule" id="MF_02123"/>
    </source>
</evidence>
<name>FGD_BEUC1</name>
<feature type="chain" id="PRO_0000413585" description="F420-dependent glucose-6-phosphate dehydrogenase">
    <location>
        <begin position="1"/>
        <end position="336"/>
    </location>
</feature>
<feature type="active site" description="Proton donor" evidence="1">
    <location>
        <position position="38"/>
    </location>
</feature>
<feature type="active site" description="Proton acceptor" evidence="1">
    <location>
        <position position="107"/>
    </location>
</feature>
<feature type="binding site" evidence="1">
    <location>
        <position position="37"/>
    </location>
    <ligand>
        <name>coenzyme F420-(gamma-Glu)n</name>
        <dbReference type="ChEBI" id="CHEBI:133980"/>
    </ligand>
</feature>
<feature type="binding site" evidence="1">
    <location>
        <position position="74"/>
    </location>
    <ligand>
        <name>coenzyme F420-(gamma-Glu)n</name>
        <dbReference type="ChEBI" id="CHEBI:133980"/>
    </ligand>
</feature>
<feature type="binding site" evidence="1">
    <location>
        <begin position="105"/>
        <end position="106"/>
    </location>
    <ligand>
        <name>coenzyme F420-(gamma-Glu)n</name>
        <dbReference type="ChEBI" id="CHEBI:133980"/>
    </ligand>
</feature>
<feature type="binding site" evidence="1">
    <location>
        <position position="110"/>
    </location>
    <ligand>
        <name>coenzyme F420-(gamma-Glu)n</name>
        <dbReference type="ChEBI" id="CHEBI:133980"/>
    </ligand>
</feature>
<feature type="binding site" evidence="1">
    <location>
        <begin position="173"/>
        <end position="174"/>
    </location>
    <ligand>
        <name>coenzyme F420-(gamma-Glu)n</name>
        <dbReference type="ChEBI" id="CHEBI:133980"/>
    </ligand>
</feature>
<feature type="binding site" evidence="1">
    <location>
        <begin position="176"/>
        <end position="177"/>
    </location>
    <ligand>
        <name>coenzyme F420-(gamma-Glu)n</name>
        <dbReference type="ChEBI" id="CHEBI:133980"/>
    </ligand>
</feature>
<feature type="binding site" evidence="1">
    <location>
        <position position="191"/>
    </location>
    <ligand>
        <name>substrate</name>
    </ligand>
</feature>
<feature type="binding site" evidence="1">
    <location>
        <position position="194"/>
    </location>
    <ligand>
        <name>substrate</name>
    </ligand>
</feature>
<feature type="binding site" evidence="1">
    <location>
        <position position="255"/>
    </location>
    <ligand>
        <name>substrate</name>
    </ligand>
</feature>
<feature type="binding site" evidence="1">
    <location>
        <position position="279"/>
    </location>
    <ligand>
        <name>substrate</name>
    </ligand>
</feature>
<comment type="function">
    <text evidence="1">Catalyzes the coenzyme F420-dependent oxidation of glucose 6-phosphate (G6P) to 6-phosphogluconolactone.</text>
</comment>
<comment type="catalytic activity">
    <reaction evidence="1">
        <text>oxidized coenzyme F420-(gamma-L-Glu)(n) + D-glucose 6-phosphate + H(+) = 6-phospho-D-glucono-1,5-lactone + reduced coenzyme F420-(gamma-L-Glu)(n)</text>
        <dbReference type="Rhea" id="RHEA:27294"/>
        <dbReference type="Rhea" id="RHEA-COMP:12939"/>
        <dbReference type="Rhea" id="RHEA-COMP:14378"/>
        <dbReference type="ChEBI" id="CHEBI:15378"/>
        <dbReference type="ChEBI" id="CHEBI:57955"/>
        <dbReference type="ChEBI" id="CHEBI:61548"/>
        <dbReference type="ChEBI" id="CHEBI:133980"/>
        <dbReference type="ChEBI" id="CHEBI:139511"/>
        <dbReference type="EC" id="1.1.98.2"/>
    </reaction>
</comment>
<comment type="subunit">
    <text evidence="1">Homodimer.</text>
</comment>
<comment type="similarity">
    <text evidence="1">Belongs to the F420-dependent glucose-6-phosphate dehydrogenase family.</text>
</comment>
<proteinExistence type="inferred from homology"/>
<reference key="1">
    <citation type="journal article" date="2009" name="Stand. Genomic Sci.">
        <title>Complete genome sequence of Beutenbergia cavernae type strain (HKI 0122).</title>
        <authorList>
            <person name="Land M."/>
            <person name="Pukall R."/>
            <person name="Abt B."/>
            <person name="Goker M."/>
            <person name="Rohde M."/>
            <person name="Glavina Del Rio T."/>
            <person name="Tice H."/>
            <person name="Copeland A."/>
            <person name="Cheng J.F."/>
            <person name="Lucas S."/>
            <person name="Chen F."/>
            <person name="Nolan M."/>
            <person name="Bruce D."/>
            <person name="Goodwin L."/>
            <person name="Pitluck S."/>
            <person name="Ivanova N."/>
            <person name="Mavromatis K."/>
            <person name="Ovchinnikova G."/>
            <person name="Pati A."/>
            <person name="Chen A."/>
            <person name="Palaniappan K."/>
            <person name="Hauser L."/>
            <person name="Chang Y.J."/>
            <person name="Jefferies C.C."/>
            <person name="Saunders E."/>
            <person name="Brettin T."/>
            <person name="Detter J.C."/>
            <person name="Han C."/>
            <person name="Chain P."/>
            <person name="Bristow J."/>
            <person name="Eisen J.A."/>
            <person name="Markowitz V."/>
            <person name="Hugenholtz P."/>
            <person name="Kyrpides N.C."/>
            <person name="Klenk H.P."/>
            <person name="Lapidus A."/>
        </authorList>
    </citation>
    <scope>NUCLEOTIDE SEQUENCE [LARGE SCALE GENOMIC DNA]</scope>
    <source>
        <strain>ATCC BAA-8 / DSM 12333 / CCUG 43141 / JCM 11478 / NBRC 16432 / NCIMB 13614 / HKI 0122</strain>
    </source>
</reference>
<sequence>MLRLGYKASAEQFAPRDLLAYTVLAEQAGFDSVFVSDHLQPWRHTGGHAPAALPWLGAAAASTERVLLGTSVLTPTLRYHPGVVAQAFATLGCLAPGRVTLGVGSGESMNEAPLGLPWPDGKERYARFREAIALIQALWAGERVTIDGTYYSARDATIYDRPDVPVPLYVAASGPSATRLAGRVGDGFICTSGKGRELYTETLLPALAEGAAKSDRTLADLDLMIEMKVSYDPDHARALEATRNWGALALTSEEKVGVEDPVEMERLADALPTERTASRWIVSDDPDEHVERIWSYVEMGFTHLVFHDPRADQAAFLERYAEEILPRLRARERQVS</sequence>